<gene>
    <name type="primary">rsrc2</name>
</gene>
<comment type="similarity">
    <text evidence="3">Belongs to the RSRC2 family.</text>
</comment>
<accession>Q7ZYR8</accession>
<keyword id="KW-0175">Coiled coil</keyword>
<keyword id="KW-1185">Reference proteome</keyword>
<dbReference type="EMBL" id="BC041722">
    <property type="protein sequence ID" value="AAH41722.1"/>
    <property type="molecule type" value="mRNA"/>
</dbReference>
<dbReference type="RefSeq" id="NP_001080860.1">
    <property type="nucleotide sequence ID" value="NM_001087391.1"/>
</dbReference>
<dbReference type="SMR" id="Q7ZYR8"/>
<dbReference type="DNASU" id="380554"/>
<dbReference type="GeneID" id="380554"/>
<dbReference type="KEGG" id="xla:380554"/>
<dbReference type="AGR" id="Xenbase:XB-GENE-977417"/>
<dbReference type="CTD" id="380554"/>
<dbReference type="Xenbase" id="XB-GENE-977417">
    <property type="gene designation" value="rsrc2.L"/>
</dbReference>
<dbReference type="OrthoDB" id="1928974at2759"/>
<dbReference type="Proteomes" id="UP000186698">
    <property type="component" value="Chromosome 1L"/>
</dbReference>
<dbReference type="Bgee" id="380554">
    <property type="expression patterns" value="Expressed in gastrula and 19 other cell types or tissues"/>
</dbReference>
<dbReference type="InterPro" id="IPR028124">
    <property type="entry name" value="SMAP_dom"/>
</dbReference>
<dbReference type="PANTHER" id="PTHR22426">
    <property type="entry name" value="ARGININE_SERINE-RICH COILED-COIL PROTEIN 2"/>
    <property type="match status" value="1"/>
</dbReference>
<dbReference type="PANTHER" id="PTHR22426:SF2">
    <property type="entry name" value="ARGININE_SERINE-RICH COILED-COIL PROTEIN 2"/>
    <property type="match status" value="1"/>
</dbReference>
<dbReference type="Pfam" id="PF15477">
    <property type="entry name" value="SMAP"/>
    <property type="match status" value="1"/>
</dbReference>
<protein>
    <recommendedName>
        <fullName>Arginine/serine-rich coiled-coil protein 2</fullName>
    </recommendedName>
</protein>
<name>RSRC2_XENLA</name>
<sequence length="350" mass="40325">MIRTNFFLKQARRHEVKAKSSKKHRSDDTVDRDHSDKIRDRLNSSENGDEKHRRKEKRSSRGKSYSRSRSRERRHRSRSHDRRKSRSRSREKKRRPRSRSRSRSKHRHRSKSRSKSREKKKRIEKPRRHSRSRSQTPPSPPAFRGRNAAMDAQEALARRLERAKKLQEQREKESAEKQQEIAAVAAAGGGSVINVAALLASGTQVTPQIAMAAQMAALQAKALAQTGISVPSYYNPAAVNPMKFAEQEKKRKMLWQGKKEGDKSQSAEIWEKLNFGNKDQNVKFRKLMGIKHEEEAGTSSVDAESFKTLKQQEEMFRNMDAQYEMARSQTHTQRGMGLGFTSSMRGMDAV</sequence>
<feature type="chain" id="PRO_0000314942" description="Arginine/serine-rich coiled-coil protein 2">
    <location>
        <begin position="1"/>
        <end position="350"/>
    </location>
</feature>
<feature type="region of interest" description="Disordered" evidence="2">
    <location>
        <begin position="1"/>
        <end position="146"/>
    </location>
</feature>
<feature type="region of interest" description="Disordered" evidence="2">
    <location>
        <begin position="328"/>
        <end position="350"/>
    </location>
</feature>
<feature type="coiled-coil region" evidence="1">
    <location>
        <begin position="146"/>
        <end position="187"/>
    </location>
</feature>
<feature type="compositionally biased region" description="Basic residues" evidence="2">
    <location>
        <begin position="10"/>
        <end position="24"/>
    </location>
</feature>
<feature type="compositionally biased region" description="Basic and acidic residues" evidence="2">
    <location>
        <begin position="25"/>
        <end position="51"/>
    </location>
</feature>
<feature type="compositionally biased region" description="Basic residues" evidence="2">
    <location>
        <begin position="52"/>
        <end position="132"/>
    </location>
</feature>
<reference key="1">
    <citation type="submission" date="2002-12" db="EMBL/GenBank/DDBJ databases">
        <authorList>
            <consortium name="NIH - Xenopus Gene Collection (XGC) project"/>
        </authorList>
    </citation>
    <scope>NUCLEOTIDE SEQUENCE [LARGE SCALE MRNA]</scope>
    <source>
        <tissue>Embryo</tissue>
    </source>
</reference>
<evidence type="ECO:0000255" key="1"/>
<evidence type="ECO:0000256" key="2">
    <source>
        <dbReference type="SAM" id="MobiDB-lite"/>
    </source>
</evidence>
<evidence type="ECO:0000305" key="3"/>
<organism>
    <name type="scientific">Xenopus laevis</name>
    <name type="common">African clawed frog</name>
    <dbReference type="NCBI Taxonomy" id="8355"/>
    <lineage>
        <taxon>Eukaryota</taxon>
        <taxon>Metazoa</taxon>
        <taxon>Chordata</taxon>
        <taxon>Craniata</taxon>
        <taxon>Vertebrata</taxon>
        <taxon>Euteleostomi</taxon>
        <taxon>Amphibia</taxon>
        <taxon>Batrachia</taxon>
        <taxon>Anura</taxon>
        <taxon>Pipoidea</taxon>
        <taxon>Pipidae</taxon>
        <taxon>Xenopodinae</taxon>
        <taxon>Xenopus</taxon>
        <taxon>Xenopus</taxon>
    </lineage>
</organism>
<proteinExistence type="evidence at transcript level"/>